<proteinExistence type="evidence at protein level"/>
<name>OTUD_DROME</name>
<gene>
    <name evidence="8" type="ORF">CG3251</name>
</gene>
<reference evidence="9" key="1">
    <citation type="journal article" date="2000" name="Science">
        <title>The genome sequence of Drosophila melanogaster.</title>
        <authorList>
            <person name="Adams M.D."/>
            <person name="Celniker S.E."/>
            <person name="Holt R.A."/>
            <person name="Evans C.A."/>
            <person name="Gocayne J.D."/>
            <person name="Amanatides P.G."/>
            <person name="Scherer S.E."/>
            <person name="Li P.W."/>
            <person name="Hoskins R.A."/>
            <person name="Galle R.F."/>
            <person name="George R.A."/>
            <person name="Lewis S.E."/>
            <person name="Richards S."/>
            <person name="Ashburner M."/>
            <person name="Henderson S.N."/>
            <person name="Sutton G.G."/>
            <person name="Wortman J.R."/>
            <person name="Yandell M.D."/>
            <person name="Zhang Q."/>
            <person name="Chen L.X."/>
            <person name="Brandon R.C."/>
            <person name="Rogers Y.-H.C."/>
            <person name="Blazej R.G."/>
            <person name="Champe M."/>
            <person name="Pfeiffer B.D."/>
            <person name="Wan K.H."/>
            <person name="Doyle C."/>
            <person name="Baxter E.G."/>
            <person name="Helt G."/>
            <person name="Nelson C.R."/>
            <person name="Miklos G.L.G."/>
            <person name="Abril J.F."/>
            <person name="Agbayani A."/>
            <person name="An H.-J."/>
            <person name="Andrews-Pfannkoch C."/>
            <person name="Baldwin D."/>
            <person name="Ballew R.M."/>
            <person name="Basu A."/>
            <person name="Baxendale J."/>
            <person name="Bayraktaroglu L."/>
            <person name="Beasley E.M."/>
            <person name="Beeson K.Y."/>
            <person name="Benos P.V."/>
            <person name="Berman B.P."/>
            <person name="Bhandari D."/>
            <person name="Bolshakov S."/>
            <person name="Borkova D."/>
            <person name="Botchan M.R."/>
            <person name="Bouck J."/>
            <person name="Brokstein P."/>
            <person name="Brottier P."/>
            <person name="Burtis K.C."/>
            <person name="Busam D.A."/>
            <person name="Butler H."/>
            <person name="Cadieu E."/>
            <person name="Center A."/>
            <person name="Chandra I."/>
            <person name="Cherry J.M."/>
            <person name="Cawley S."/>
            <person name="Dahlke C."/>
            <person name="Davenport L.B."/>
            <person name="Davies P."/>
            <person name="de Pablos B."/>
            <person name="Delcher A."/>
            <person name="Deng Z."/>
            <person name="Mays A.D."/>
            <person name="Dew I."/>
            <person name="Dietz S.M."/>
            <person name="Dodson K."/>
            <person name="Doup L.E."/>
            <person name="Downes M."/>
            <person name="Dugan-Rocha S."/>
            <person name="Dunkov B.C."/>
            <person name="Dunn P."/>
            <person name="Durbin K.J."/>
            <person name="Evangelista C.C."/>
            <person name="Ferraz C."/>
            <person name="Ferriera S."/>
            <person name="Fleischmann W."/>
            <person name="Fosler C."/>
            <person name="Gabrielian A.E."/>
            <person name="Garg N.S."/>
            <person name="Gelbart W.M."/>
            <person name="Glasser K."/>
            <person name="Glodek A."/>
            <person name="Gong F."/>
            <person name="Gorrell J.H."/>
            <person name="Gu Z."/>
            <person name="Guan P."/>
            <person name="Harris M."/>
            <person name="Harris N.L."/>
            <person name="Harvey D.A."/>
            <person name="Heiman T.J."/>
            <person name="Hernandez J.R."/>
            <person name="Houck J."/>
            <person name="Hostin D."/>
            <person name="Houston K.A."/>
            <person name="Howland T.J."/>
            <person name="Wei M.-H."/>
            <person name="Ibegwam C."/>
            <person name="Jalali M."/>
            <person name="Kalush F."/>
            <person name="Karpen G.H."/>
            <person name="Ke Z."/>
            <person name="Kennison J.A."/>
            <person name="Ketchum K.A."/>
            <person name="Kimmel B.E."/>
            <person name="Kodira C.D."/>
            <person name="Kraft C.L."/>
            <person name="Kravitz S."/>
            <person name="Kulp D."/>
            <person name="Lai Z."/>
            <person name="Lasko P."/>
            <person name="Lei Y."/>
            <person name="Levitsky A.A."/>
            <person name="Li J.H."/>
            <person name="Li Z."/>
            <person name="Liang Y."/>
            <person name="Lin X."/>
            <person name="Liu X."/>
            <person name="Mattei B."/>
            <person name="McIntosh T.C."/>
            <person name="McLeod M.P."/>
            <person name="McPherson D."/>
            <person name="Merkulov G."/>
            <person name="Milshina N.V."/>
            <person name="Mobarry C."/>
            <person name="Morris J."/>
            <person name="Moshrefi A."/>
            <person name="Mount S.M."/>
            <person name="Moy M."/>
            <person name="Murphy B."/>
            <person name="Murphy L."/>
            <person name="Muzny D.M."/>
            <person name="Nelson D.L."/>
            <person name="Nelson D.R."/>
            <person name="Nelson K.A."/>
            <person name="Nixon K."/>
            <person name="Nusskern D.R."/>
            <person name="Pacleb J.M."/>
            <person name="Palazzolo M."/>
            <person name="Pittman G.S."/>
            <person name="Pan S."/>
            <person name="Pollard J."/>
            <person name="Puri V."/>
            <person name="Reese M.G."/>
            <person name="Reinert K."/>
            <person name="Remington K."/>
            <person name="Saunders R.D.C."/>
            <person name="Scheeler F."/>
            <person name="Shen H."/>
            <person name="Shue B.C."/>
            <person name="Siden-Kiamos I."/>
            <person name="Simpson M."/>
            <person name="Skupski M.P."/>
            <person name="Smith T.J."/>
            <person name="Spier E."/>
            <person name="Spradling A.C."/>
            <person name="Stapleton M."/>
            <person name="Strong R."/>
            <person name="Sun E."/>
            <person name="Svirskas R."/>
            <person name="Tector C."/>
            <person name="Turner R."/>
            <person name="Venter E."/>
            <person name="Wang A.H."/>
            <person name="Wang X."/>
            <person name="Wang Z.-Y."/>
            <person name="Wassarman D.A."/>
            <person name="Weinstock G.M."/>
            <person name="Weissenbach J."/>
            <person name="Williams S.M."/>
            <person name="Woodage T."/>
            <person name="Worley K.C."/>
            <person name="Wu D."/>
            <person name="Yang S."/>
            <person name="Yao Q.A."/>
            <person name="Ye J."/>
            <person name="Yeh R.-F."/>
            <person name="Zaveri J.S."/>
            <person name="Zhan M."/>
            <person name="Zhang G."/>
            <person name="Zhao Q."/>
            <person name="Zheng L."/>
            <person name="Zheng X.H."/>
            <person name="Zhong F.N."/>
            <person name="Zhong W."/>
            <person name="Zhou X."/>
            <person name="Zhu S.C."/>
            <person name="Zhu X."/>
            <person name="Smith H.O."/>
            <person name="Gibbs R.A."/>
            <person name="Myers E.W."/>
            <person name="Rubin G.M."/>
            <person name="Venter J.C."/>
        </authorList>
    </citation>
    <scope>NUCLEOTIDE SEQUENCE [LARGE SCALE GENOMIC DNA]</scope>
    <source>
        <strain evidence="9">Berkeley</strain>
    </source>
</reference>
<reference evidence="9" key="2">
    <citation type="journal article" date="2002" name="Genome Biol.">
        <title>Annotation of the Drosophila melanogaster euchromatic genome: a systematic review.</title>
        <authorList>
            <person name="Misra S."/>
            <person name="Crosby M.A."/>
            <person name="Mungall C.J."/>
            <person name="Matthews B.B."/>
            <person name="Campbell K.S."/>
            <person name="Hradecky P."/>
            <person name="Huang Y."/>
            <person name="Kaminker J.S."/>
            <person name="Millburn G.H."/>
            <person name="Prochnik S.E."/>
            <person name="Smith C.D."/>
            <person name="Tupy J.L."/>
            <person name="Whitfield E.J."/>
            <person name="Bayraktaroglu L."/>
            <person name="Berman B.P."/>
            <person name="Bettencourt B.R."/>
            <person name="Celniker S.E."/>
            <person name="de Grey A.D.N.J."/>
            <person name="Drysdale R.A."/>
            <person name="Harris N.L."/>
            <person name="Richter J."/>
            <person name="Russo S."/>
            <person name="Schroeder A.J."/>
            <person name="Shu S.Q."/>
            <person name="Stapleton M."/>
            <person name="Yamada C."/>
            <person name="Ashburner M."/>
            <person name="Gelbart W.M."/>
            <person name="Rubin G.M."/>
            <person name="Lewis S.E."/>
        </authorList>
    </citation>
    <scope>GENOME REANNOTATION</scope>
    <source>
        <strain evidence="9">Berkeley</strain>
    </source>
</reference>
<reference evidence="7" key="3">
    <citation type="submission" date="2007-12" db="EMBL/GenBank/DDBJ databases">
        <authorList>
            <person name="Stapleton M."/>
            <person name="Carlson J."/>
            <person name="Frise E."/>
            <person name="Kapadia B."/>
            <person name="Park S."/>
            <person name="Wan K."/>
            <person name="Yu C."/>
            <person name="Celniker S."/>
        </authorList>
    </citation>
    <scope>NUCLEOTIDE SEQUENCE [LARGE SCALE MRNA]</scope>
    <source>
        <tissue evidence="7">Embryo</tissue>
    </source>
</reference>
<reference evidence="5" key="4">
    <citation type="journal article" date="2015" name="PLoS ONE">
        <title>Evolutionary Loss of Activity in De-Ubiquitylating Enzymes of the OTU Family.</title>
        <authorList>
            <person name="Louis M."/>
            <person name="Hofmann K."/>
            <person name="Broemer M."/>
        </authorList>
    </citation>
    <scope>FUNCTION</scope>
    <scope>MUTAGENESIS OF SER-40</scope>
</reference>
<evidence type="ECO:0000255" key="1">
    <source>
        <dbReference type="PROSITE-ProRule" id="PRU00139"/>
    </source>
</evidence>
<evidence type="ECO:0000255" key="2">
    <source>
        <dbReference type="PROSITE-ProRule" id="PRU00211"/>
    </source>
</evidence>
<evidence type="ECO:0000256" key="3">
    <source>
        <dbReference type="SAM" id="MobiDB-lite"/>
    </source>
</evidence>
<evidence type="ECO:0000269" key="4">
    <source>
    </source>
</evidence>
<evidence type="ECO:0000305" key="5"/>
<evidence type="ECO:0000305" key="6">
    <source>
    </source>
</evidence>
<evidence type="ECO:0000312" key="7">
    <source>
        <dbReference type="EMBL" id="ABY20541.1"/>
    </source>
</evidence>
<evidence type="ECO:0000312" key="8">
    <source>
        <dbReference type="FlyBase" id="FBgn0031622"/>
    </source>
</evidence>
<evidence type="ECO:0000312" key="9">
    <source>
        <dbReference type="Proteomes" id="UP000000803"/>
    </source>
</evidence>
<feature type="chain" id="PRO_0000460777" description="OTU domain-containing protein CG3251">
    <location>
        <begin position="1"/>
        <end position="495"/>
    </location>
</feature>
<feature type="domain" description="OTU" evidence="1">
    <location>
        <begin position="29"/>
        <end position="150"/>
    </location>
</feature>
<feature type="domain" description="Tudor" evidence="2">
    <location>
        <begin position="302"/>
        <end position="364"/>
    </location>
</feature>
<feature type="region of interest" description="Disordered" evidence="3">
    <location>
        <begin position="375"/>
        <end position="404"/>
    </location>
</feature>
<feature type="compositionally biased region" description="Polar residues" evidence="3">
    <location>
        <begin position="375"/>
        <end position="389"/>
    </location>
</feature>
<feature type="compositionally biased region" description="Pro residues" evidence="3">
    <location>
        <begin position="395"/>
        <end position="404"/>
    </location>
</feature>
<feature type="mutagenesis site" description="Does not rescue in vitro deubiquitinase activity." evidence="4">
    <original>S</original>
    <variation>C</variation>
    <location>
        <position position="40"/>
    </location>
</feature>
<comment type="function">
    <text evidence="4">Putative OTU-type deubiquitinase (PubMed:26588485). Catalytically inactive towards all diubiquitin molecules and long K48- and K63- linked ubiquitin chains in vitro (PubMed:26588485). Potential modulator of apoptosis (PubMed:26588485).</text>
</comment>
<comment type="caution">
    <text evidence="4 5 6">Both this protein and otu are putative deubiquitinases with homology to other OTU-type deubiquitinases (EC:3.4.19.12), although the nucleophile cysteine residue of its active site has been mutated to serine (Ser-40). Initial characterization showed a lack of deubiquitinase activity towards all diubiquitin molecules and long K48- and K63- linked ubiquitin chains, even when the nucleophile was mutated back to a cysteine (PubMed:26588485). Subsequent characterization using a more sensitive assay did detect low level deubiquitinase activity for otu (this protein was not retested). Deubiquitinases that are serine proteases instead of cysteine- or metallo- proteases have to date not been described.</text>
</comment>
<accession>Q9VR20</accession>
<organism evidence="9">
    <name type="scientific">Drosophila melanogaster</name>
    <name type="common">Fruit fly</name>
    <dbReference type="NCBI Taxonomy" id="7227"/>
    <lineage>
        <taxon>Eukaryota</taxon>
        <taxon>Metazoa</taxon>
        <taxon>Ecdysozoa</taxon>
        <taxon>Arthropoda</taxon>
        <taxon>Hexapoda</taxon>
        <taxon>Insecta</taxon>
        <taxon>Pterygota</taxon>
        <taxon>Neoptera</taxon>
        <taxon>Endopterygota</taxon>
        <taxon>Diptera</taxon>
        <taxon>Brachycera</taxon>
        <taxon>Muscomorpha</taxon>
        <taxon>Ephydroidea</taxon>
        <taxon>Drosophilidae</taxon>
        <taxon>Drosophila</taxon>
        <taxon>Sophophora</taxon>
    </lineage>
</organism>
<sequence>MSEVLQRLASTEVRKARDPIDRFLERRQLFRKHMLGDASSLFRVVAEQVYDTQMLHYEVRMECVRYMFTKWKTFRRFVSGDFDEYLWHLGKTKTAGTILELGAMCHLYRRNVIIYEPFDMGRMVTYNKDYKEILRIFMNSMGHFETVLTMQDVDMAAVCQSVSFKMLYKHLFRLPDVDLAVEWMLYPDTFKMGTEYEFDSRGRAIRLLCRNGRSFKLDRPESTICLLENSQMCPFHNRRLAMGGQFADFSCMRILLEENNIPFSYLVAKSMDPCRYRNVELTSAIEARREAYEFGIYIGDYNFKVGAKCQVQLDTNRRDLLSACYIQSIDKKKSVCKVFIEEQGKLVDVPSDNLHPLPPDEFKAWDFARKRPQRLHNSQMGRQSVQGDQQGFVPDPMPGTAPSMPPPPVADPRPVNVTAQQPPVFGPSRWMEPTRPLMPNPLMIHQTGSFVFVQQPRVGPPSVMMHVLIIVHNAPYMLAFDHAPHPPAPQCTAPF</sequence>
<dbReference type="EMBL" id="AE014134">
    <property type="protein sequence ID" value="AAF50988.1"/>
    <property type="molecule type" value="Genomic_DNA"/>
</dbReference>
<dbReference type="EMBL" id="BT031300">
    <property type="protein sequence ID" value="ABY20541.1"/>
    <property type="molecule type" value="mRNA"/>
</dbReference>
<dbReference type="RefSeq" id="NP_608851.1">
    <property type="nucleotide sequence ID" value="NM_135007.2"/>
</dbReference>
<dbReference type="SMR" id="Q9VR20"/>
<dbReference type="IntAct" id="Q9VR20">
    <property type="interactions" value="1"/>
</dbReference>
<dbReference type="STRING" id="7227.FBpp0077113"/>
<dbReference type="MEROPS" id="C85.002"/>
<dbReference type="PaxDb" id="7227-FBpp0077113"/>
<dbReference type="DNASU" id="33671"/>
<dbReference type="EnsemblMetazoa" id="FBtr0077422">
    <property type="protein sequence ID" value="FBpp0077113"/>
    <property type="gene ID" value="FBgn0031622"/>
</dbReference>
<dbReference type="GeneID" id="33671"/>
<dbReference type="KEGG" id="dme:Dmel_CG3251"/>
<dbReference type="UCSC" id="CG3251-RA">
    <property type="organism name" value="d. melanogaster"/>
</dbReference>
<dbReference type="AGR" id="FB:FBgn0031622"/>
<dbReference type="FlyBase" id="FBgn0031622">
    <property type="gene designation" value="CG3251"/>
</dbReference>
<dbReference type="VEuPathDB" id="VectorBase:FBgn0031622"/>
<dbReference type="eggNOG" id="KOG2605">
    <property type="taxonomic scope" value="Eukaryota"/>
</dbReference>
<dbReference type="GeneTree" id="ENSGT00940000174398"/>
<dbReference type="HOGENOM" id="CLU_042968_0_0_1"/>
<dbReference type="InParanoid" id="Q9VR20"/>
<dbReference type="OMA" id="CQAVAFK"/>
<dbReference type="OrthoDB" id="10017659at2759"/>
<dbReference type="BioGRID-ORCS" id="33671">
    <property type="hits" value="0 hits in 3 CRISPR screens"/>
</dbReference>
<dbReference type="GenomeRNAi" id="33671"/>
<dbReference type="Proteomes" id="UP000000803">
    <property type="component" value="Chromosome 2L"/>
</dbReference>
<dbReference type="Bgee" id="FBgn0031622">
    <property type="expression patterns" value="Expressed in spermatogonium in testis and 9 other cell types or tissues"/>
</dbReference>
<dbReference type="GO" id="GO:0101005">
    <property type="term" value="F:deubiquitinase activity"/>
    <property type="evidence" value="ECO:0000250"/>
    <property type="project" value="FlyBase"/>
</dbReference>
<dbReference type="GO" id="GO:0061578">
    <property type="term" value="F:K63-linked deubiquitinase activity"/>
    <property type="evidence" value="ECO:0000318"/>
    <property type="project" value="GO_Central"/>
</dbReference>
<dbReference type="GO" id="GO:0008236">
    <property type="term" value="F:serine-type peptidase activity"/>
    <property type="evidence" value="ECO:0000250"/>
    <property type="project" value="FlyBase"/>
</dbReference>
<dbReference type="GO" id="GO:0006915">
    <property type="term" value="P:apoptotic process"/>
    <property type="evidence" value="ECO:0007669"/>
    <property type="project" value="UniProtKB-KW"/>
</dbReference>
<dbReference type="GO" id="GO:0042981">
    <property type="term" value="P:regulation of apoptotic process"/>
    <property type="evidence" value="ECO:0000315"/>
    <property type="project" value="UniProtKB"/>
</dbReference>
<dbReference type="GO" id="GO:0009966">
    <property type="term" value="P:regulation of signal transduction"/>
    <property type="evidence" value="ECO:0000318"/>
    <property type="project" value="GO_Central"/>
</dbReference>
<dbReference type="CDD" id="cd22753">
    <property type="entry name" value="OTU_ALG13-like"/>
    <property type="match status" value="1"/>
</dbReference>
<dbReference type="CDD" id="cd20380">
    <property type="entry name" value="Tudor_TDRD13-like"/>
    <property type="match status" value="1"/>
</dbReference>
<dbReference type="Gene3D" id="3.90.70.80">
    <property type="match status" value="1"/>
</dbReference>
<dbReference type="InterPro" id="IPR003323">
    <property type="entry name" value="OTU_dom"/>
</dbReference>
<dbReference type="InterPro" id="IPR049769">
    <property type="entry name" value="OTU_OTU"/>
</dbReference>
<dbReference type="InterPro" id="IPR049770">
    <property type="entry name" value="OTU_Tudor"/>
</dbReference>
<dbReference type="InterPro" id="IPR038765">
    <property type="entry name" value="Papain-like_cys_pep_sf"/>
</dbReference>
<dbReference type="InterPro" id="IPR050704">
    <property type="entry name" value="Peptidase_C85-like"/>
</dbReference>
<dbReference type="PANTHER" id="PTHR12419">
    <property type="entry name" value="OTU DOMAIN CONTAINING PROTEIN"/>
    <property type="match status" value="1"/>
</dbReference>
<dbReference type="PANTHER" id="PTHR12419:SF115">
    <property type="entry name" value="PROTEIN OVARIAN TUMOR LOCUS-RELATED"/>
    <property type="match status" value="1"/>
</dbReference>
<dbReference type="Pfam" id="PF02338">
    <property type="entry name" value="OTU"/>
    <property type="match status" value="1"/>
</dbReference>
<dbReference type="SUPFAM" id="SSF54001">
    <property type="entry name" value="Cysteine proteinases"/>
    <property type="match status" value="1"/>
</dbReference>
<dbReference type="PROSITE" id="PS50802">
    <property type="entry name" value="OTU"/>
    <property type="match status" value="1"/>
</dbReference>
<protein>
    <recommendedName>
        <fullName evidence="5">OTU domain-containing protein CG3251</fullName>
    </recommendedName>
</protein>
<keyword id="KW-0053">Apoptosis</keyword>
<keyword id="KW-1185">Reference proteome</keyword>